<keyword id="KW-0963">Cytoplasm</keyword>
<keyword id="KW-0324">Glycolysis</keyword>
<keyword id="KW-0456">Lyase</keyword>
<keyword id="KW-0460">Magnesium</keyword>
<keyword id="KW-0479">Metal-binding</keyword>
<keyword id="KW-0964">Secreted</keyword>
<comment type="function">
    <text evidence="1">Catalyzes the reversible conversion of 2-phosphoglycerate (2-PG) into phosphoenolpyruvate (PEP). It is essential for the degradation of carbohydrates via glycolysis.</text>
</comment>
<comment type="catalytic activity">
    <reaction evidence="1">
        <text>(2R)-2-phosphoglycerate = phosphoenolpyruvate + H2O</text>
        <dbReference type="Rhea" id="RHEA:10164"/>
        <dbReference type="ChEBI" id="CHEBI:15377"/>
        <dbReference type="ChEBI" id="CHEBI:58289"/>
        <dbReference type="ChEBI" id="CHEBI:58702"/>
        <dbReference type="EC" id="4.2.1.11"/>
    </reaction>
</comment>
<comment type="cofactor">
    <cofactor evidence="1">
        <name>Mg(2+)</name>
        <dbReference type="ChEBI" id="CHEBI:18420"/>
    </cofactor>
    <text evidence="1">Binds a second Mg(2+) ion via substrate during catalysis.</text>
</comment>
<comment type="pathway">
    <text evidence="1">Carbohydrate degradation; glycolysis; pyruvate from D-glyceraldehyde 3-phosphate: step 4/5.</text>
</comment>
<comment type="subunit">
    <text evidence="1">Component of the RNA degradosome, a multiprotein complex involved in RNA processing and mRNA degradation.</text>
</comment>
<comment type="subcellular location">
    <subcellularLocation>
        <location evidence="1">Cytoplasm</location>
    </subcellularLocation>
    <subcellularLocation>
        <location evidence="1">Secreted</location>
    </subcellularLocation>
    <subcellularLocation>
        <location evidence="1">Cell surface</location>
    </subcellularLocation>
    <text evidence="1">Fractions of enolase are present in both the cytoplasm and on the cell surface.</text>
</comment>
<comment type="similarity">
    <text evidence="1">Belongs to the enolase family.</text>
</comment>
<organism>
    <name type="scientific">Xylella fastidiosa (strain M23)</name>
    <dbReference type="NCBI Taxonomy" id="405441"/>
    <lineage>
        <taxon>Bacteria</taxon>
        <taxon>Pseudomonadati</taxon>
        <taxon>Pseudomonadota</taxon>
        <taxon>Gammaproteobacteria</taxon>
        <taxon>Lysobacterales</taxon>
        <taxon>Lysobacteraceae</taxon>
        <taxon>Xylella</taxon>
    </lineage>
</organism>
<dbReference type="EC" id="4.2.1.11" evidence="1"/>
<dbReference type="EMBL" id="CP001011">
    <property type="protein sequence ID" value="ACB92012.1"/>
    <property type="molecule type" value="Genomic_DNA"/>
</dbReference>
<dbReference type="RefSeq" id="WP_004090561.1">
    <property type="nucleotide sequence ID" value="NC_010577.1"/>
</dbReference>
<dbReference type="SMR" id="B2I937"/>
<dbReference type="GeneID" id="93904254"/>
<dbReference type="KEGG" id="xfn:XfasM23_0568"/>
<dbReference type="HOGENOM" id="CLU_031223_2_1_6"/>
<dbReference type="UniPathway" id="UPA00109">
    <property type="reaction ID" value="UER00187"/>
</dbReference>
<dbReference type="Proteomes" id="UP000001698">
    <property type="component" value="Chromosome"/>
</dbReference>
<dbReference type="GO" id="GO:0009986">
    <property type="term" value="C:cell surface"/>
    <property type="evidence" value="ECO:0007669"/>
    <property type="project" value="UniProtKB-SubCell"/>
</dbReference>
<dbReference type="GO" id="GO:0005576">
    <property type="term" value="C:extracellular region"/>
    <property type="evidence" value="ECO:0007669"/>
    <property type="project" value="UniProtKB-SubCell"/>
</dbReference>
<dbReference type="GO" id="GO:0000015">
    <property type="term" value="C:phosphopyruvate hydratase complex"/>
    <property type="evidence" value="ECO:0007669"/>
    <property type="project" value="InterPro"/>
</dbReference>
<dbReference type="GO" id="GO:0000287">
    <property type="term" value="F:magnesium ion binding"/>
    <property type="evidence" value="ECO:0007669"/>
    <property type="project" value="UniProtKB-UniRule"/>
</dbReference>
<dbReference type="GO" id="GO:0004634">
    <property type="term" value="F:phosphopyruvate hydratase activity"/>
    <property type="evidence" value="ECO:0007669"/>
    <property type="project" value="UniProtKB-UniRule"/>
</dbReference>
<dbReference type="GO" id="GO:0006096">
    <property type="term" value="P:glycolytic process"/>
    <property type="evidence" value="ECO:0007669"/>
    <property type="project" value="UniProtKB-UniRule"/>
</dbReference>
<dbReference type="CDD" id="cd03313">
    <property type="entry name" value="enolase"/>
    <property type="match status" value="1"/>
</dbReference>
<dbReference type="FunFam" id="3.20.20.120:FF:000001">
    <property type="entry name" value="Enolase"/>
    <property type="match status" value="1"/>
</dbReference>
<dbReference type="FunFam" id="3.30.390.10:FF:000001">
    <property type="entry name" value="Enolase"/>
    <property type="match status" value="1"/>
</dbReference>
<dbReference type="Gene3D" id="3.20.20.120">
    <property type="entry name" value="Enolase-like C-terminal domain"/>
    <property type="match status" value="1"/>
</dbReference>
<dbReference type="Gene3D" id="3.30.390.10">
    <property type="entry name" value="Enolase-like, N-terminal domain"/>
    <property type="match status" value="1"/>
</dbReference>
<dbReference type="HAMAP" id="MF_00318">
    <property type="entry name" value="Enolase"/>
    <property type="match status" value="1"/>
</dbReference>
<dbReference type="InterPro" id="IPR000941">
    <property type="entry name" value="Enolase"/>
</dbReference>
<dbReference type="InterPro" id="IPR036849">
    <property type="entry name" value="Enolase-like_C_sf"/>
</dbReference>
<dbReference type="InterPro" id="IPR029017">
    <property type="entry name" value="Enolase-like_N"/>
</dbReference>
<dbReference type="InterPro" id="IPR020810">
    <property type="entry name" value="Enolase_C"/>
</dbReference>
<dbReference type="InterPro" id="IPR020809">
    <property type="entry name" value="Enolase_CS"/>
</dbReference>
<dbReference type="InterPro" id="IPR020811">
    <property type="entry name" value="Enolase_N"/>
</dbReference>
<dbReference type="NCBIfam" id="TIGR01060">
    <property type="entry name" value="eno"/>
    <property type="match status" value="1"/>
</dbReference>
<dbReference type="PANTHER" id="PTHR11902">
    <property type="entry name" value="ENOLASE"/>
    <property type="match status" value="1"/>
</dbReference>
<dbReference type="PANTHER" id="PTHR11902:SF1">
    <property type="entry name" value="ENOLASE"/>
    <property type="match status" value="1"/>
</dbReference>
<dbReference type="Pfam" id="PF00113">
    <property type="entry name" value="Enolase_C"/>
    <property type="match status" value="1"/>
</dbReference>
<dbReference type="Pfam" id="PF03952">
    <property type="entry name" value="Enolase_N"/>
    <property type="match status" value="1"/>
</dbReference>
<dbReference type="PIRSF" id="PIRSF001400">
    <property type="entry name" value="Enolase"/>
    <property type="match status" value="1"/>
</dbReference>
<dbReference type="PRINTS" id="PR00148">
    <property type="entry name" value="ENOLASE"/>
</dbReference>
<dbReference type="SFLD" id="SFLDF00002">
    <property type="entry name" value="enolase"/>
    <property type="match status" value="1"/>
</dbReference>
<dbReference type="SFLD" id="SFLDG00178">
    <property type="entry name" value="enolase"/>
    <property type="match status" value="1"/>
</dbReference>
<dbReference type="SMART" id="SM01192">
    <property type="entry name" value="Enolase_C"/>
    <property type="match status" value="1"/>
</dbReference>
<dbReference type="SMART" id="SM01193">
    <property type="entry name" value="Enolase_N"/>
    <property type="match status" value="1"/>
</dbReference>
<dbReference type="SUPFAM" id="SSF51604">
    <property type="entry name" value="Enolase C-terminal domain-like"/>
    <property type="match status" value="1"/>
</dbReference>
<dbReference type="SUPFAM" id="SSF54826">
    <property type="entry name" value="Enolase N-terminal domain-like"/>
    <property type="match status" value="1"/>
</dbReference>
<dbReference type="PROSITE" id="PS00164">
    <property type="entry name" value="ENOLASE"/>
    <property type="match status" value="1"/>
</dbReference>
<accession>B2I937</accession>
<feature type="chain" id="PRO_1000115936" description="Enolase">
    <location>
        <begin position="1"/>
        <end position="430"/>
    </location>
</feature>
<feature type="active site" description="Proton donor" evidence="1">
    <location>
        <position position="207"/>
    </location>
</feature>
<feature type="active site" description="Proton acceptor" evidence="1">
    <location>
        <position position="339"/>
    </location>
</feature>
<feature type="binding site" evidence="1">
    <location>
        <position position="165"/>
    </location>
    <ligand>
        <name>(2R)-2-phosphoglycerate</name>
        <dbReference type="ChEBI" id="CHEBI:58289"/>
    </ligand>
</feature>
<feature type="binding site" evidence="1">
    <location>
        <position position="244"/>
    </location>
    <ligand>
        <name>Mg(2+)</name>
        <dbReference type="ChEBI" id="CHEBI:18420"/>
    </ligand>
</feature>
<feature type="binding site" evidence="1">
    <location>
        <position position="287"/>
    </location>
    <ligand>
        <name>Mg(2+)</name>
        <dbReference type="ChEBI" id="CHEBI:18420"/>
    </ligand>
</feature>
<feature type="binding site" evidence="1">
    <location>
        <position position="314"/>
    </location>
    <ligand>
        <name>Mg(2+)</name>
        <dbReference type="ChEBI" id="CHEBI:18420"/>
    </ligand>
</feature>
<feature type="binding site" evidence="1">
    <location>
        <position position="339"/>
    </location>
    <ligand>
        <name>(2R)-2-phosphoglycerate</name>
        <dbReference type="ChEBI" id="CHEBI:58289"/>
    </ligand>
</feature>
<feature type="binding site" evidence="1">
    <location>
        <position position="368"/>
    </location>
    <ligand>
        <name>(2R)-2-phosphoglycerate</name>
        <dbReference type="ChEBI" id="CHEBI:58289"/>
    </ligand>
</feature>
<feature type="binding site" evidence="1">
    <location>
        <position position="369"/>
    </location>
    <ligand>
        <name>(2R)-2-phosphoglycerate</name>
        <dbReference type="ChEBI" id="CHEBI:58289"/>
    </ligand>
</feature>
<feature type="binding site" evidence="1">
    <location>
        <position position="390"/>
    </location>
    <ligand>
        <name>(2R)-2-phosphoglycerate</name>
        <dbReference type="ChEBI" id="CHEBI:58289"/>
    </ligand>
</feature>
<reference key="1">
    <citation type="journal article" date="2010" name="J. Bacteriol.">
        <title>Whole genome sequences of two Xylella fastidiosa strains (M12 and M23) causing almond leaf scorch disease in California.</title>
        <authorList>
            <person name="Chen J."/>
            <person name="Xie G."/>
            <person name="Han S."/>
            <person name="Chertkov O."/>
            <person name="Sims D."/>
            <person name="Civerolo E.L."/>
        </authorList>
    </citation>
    <scope>NUCLEOTIDE SEQUENCE [LARGE SCALE GENOMIC DNA]</scope>
    <source>
        <strain>M23</strain>
    </source>
</reference>
<protein>
    <recommendedName>
        <fullName evidence="1">Enolase</fullName>
        <ecNumber evidence="1">4.2.1.11</ecNumber>
    </recommendedName>
    <alternativeName>
        <fullName evidence="1">2-phospho-D-glycerate hydro-lyase</fullName>
    </alternativeName>
    <alternativeName>
        <fullName evidence="1">2-phosphoglycerate dehydratase</fullName>
    </alternativeName>
</protein>
<proteinExistence type="inferred from homology"/>
<gene>
    <name evidence="1" type="primary">eno</name>
    <name type="ordered locus">XfasM23_0568</name>
</gene>
<name>ENO_XYLF2</name>
<sequence>MTVIAKIYAREILDSRGNPTLEAEVTLENAVCGRAAVPSGASTGTKEAVELRDGDKTRYLGKGVRAAVDNVNGVIAAALVGFDGADQTGLDHRLINLDGTENKGRLGANALLGVSLATAHAVAAARKQPLWMYLSTLGESKLSLPVPMMNIINGGAHADNNVDFQEFMVLPVGFASFSEALRAGTEIFHALKSVLKGQGLSTAVGDEGGFAPDFRSNVEALDAILEAIGRAGYIAGEDVLLGLDVASSEFRNNGKYNLVGENKRLTSEQFVDFLDDLVAQYPIISIEDGLAEDDWVGWKQLTERIGHKVQLVGDDLFVTNPKVFQEGITSGIANAILIKLNQIGTLTETLESIAMAHRAQYAAIVSHRSGETEDTSIADIAVATTATQIKTGSLCRSDRVAKYNQLLRIEQALGVGARYAGRDAFVSLKS</sequence>
<evidence type="ECO:0000255" key="1">
    <source>
        <dbReference type="HAMAP-Rule" id="MF_00318"/>
    </source>
</evidence>